<reference key="1">
    <citation type="journal article" date="2010" name="J. Bacteriol.">
        <title>The genetic basis of laboratory adaptation in Caulobacter crescentus.</title>
        <authorList>
            <person name="Marks M.E."/>
            <person name="Castro-Rojas C.M."/>
            <person name="Teiling C."/>
            <person name="Du L."/>
            <person name="Kapatral V."/>
            <person name="Walunas T.L."/>
            <person name="Crosson S."/>
        </authorList>
    </citation>
    <scope>NUCLEOTIDE SEQUENCE [LARGE SCALE GENOMIC DNA]</scope>
    <source>
        <strain>NA1000 / CB15N</strain>
    </source>
</reference>
<sequence length="448" mass="47298">MRYLPLTPEDRVEMLGAIGVKSIDDLFVDVPVSARRDAPVDLPHHAGELDVEREMAGLARRNRAAGEGPFFCGAGAYRHHVPATVDHIIQRSEFLTSYTPYQPEIAQGTLQVLFEFQTQVAALTGMEVANASLYDGSTGAAEAVMMAQRVTRRNKAVMSGGVHPHYVGAIETLAHAAGVATQALPAAVDAEDAVIAAIDQDTACVVVQTPNVFGTVTDVSKIAEAAHAAGALLIVVTTEAVSFGLLKSPGEMGADIAVAEGQSIGNGLNFGGPYVGLFACKEKFVRQMPGRLCGETVDADGKRGFVLTLSTREQHIRRDKATSNICTNSGLCALAFSIHMSLLGETGLRQLAAVNHQKALALRDALKAVPGVEILTPRFFNEFAIRVPGKAAEVVEILAAHGVIAGVPFSRLDAKAGLDDVLLVAATETTLDIDIPVFAKALTKVFAQ</sequence>
<accession>B8H4V4</accession>
<gene>
    <name evidence="1" type="primary">gcvPA</name>
    <name type="ordered locus">CCNA_03463</name>
</gene>
<keyword id="KW-0560">Oxidoreductase</keyword>
<keyword id="KW-1185">Reference proteome</keyword>
<evidence type="ECO:0000255" key="1">
    <source>
        <dbReference type="HAMAP-Rule" id="MF_00712"/>
    </source>
</evidence>
<proteinExistence type="inferred from homology"/>
<organism>
    <name type="scientific">Caulobacter vibrioides (strain NA1000 / CB15N)</name>
    <name type="common">Caulobacter crescentus</name>
    <dbReference type="NCBI Taxonomy" id="565050"/>
    <lineage>
        <taxon>Bacteria</taxon>
        <taxon>Pseudomonadati</taxon>
        <taxon>Pseudomonadota</taxon>
        <taxon>Alphaproteobacteria</taxon>
        <taxon>Caulobacterales</taxon>
        <taxon>Caulobacteraceae</taxon>
        <taxon>Caulobacter</taxon>
    </lineage>
</organism>
<feature type="chain" id="PRO_1000147980" description="Probable glycine dehydrogenase (decarboxylating) subunit 1">
    <location>
        <begin position="1"/>
        <end position="448"/>
    </location>
</feature>
<name>GCSPA_CAUVN</name>
<comment type="function">
    <text evidence="1">The glycine cleavage system catalyzes the degradation of glycine. The P protein binds the alpha-amino group of glycine through its pyridoxal phosphate cofactor; CO(2) is released and the remaining methylamine moiety is then transferred to the lipoamide cofactor of the H protein.</text>
</comment>
<comment type="catalytic activity">
    <reaction evidence="1">
        <text>N(6)-[(R)-lipoyl]-L-lysyl-[glycine-cleavage complex H protein] + glycine + H(+) = N(6)-[(R)-S(8)-aminomethyldihydrolipoyl]-L-lysyl-[glycine-cleavage complex H protein] + CO2</text>
        <dbReference type="Rhea" id="RHEA:24304"/>
        <dbReference type="Rhea" id="RHEA-COMP:10494"/>
        <dbReference type="Rhea" id="RHEA-COMP:10495"/>
        <dbReference type="ChEBI" id="CHEBI:15378"/>
        <dbReference type="ChEBI" id="CHEBI:16526"/>
        <dbReference type="ChEBI" id="CHEBI:57305"/>
        <dbReference type="ChEBI" id="CHEBI:83099"/>
        <dbReference type="ChEBI" id="CHEBI:83143"/>
        <dbReference type="EC" id="1.4.4.2"/>
    </reaction>
</comment>
<comment type="subunit">
    <text evidence="1">The glycine cleavage system is composed of four proteins: P, T, L and H. In this organism, the P 'protein' is a heterodimer of two subunits.</text>
</comment>
<comment type="similarity">
    <text evidence="1">Belongs to the GcvP family. N-terminal subunit subfamily.</text>
</comment>
<protein>
    <recommendedName>
        <fullName evidence="1">Probable glycine dehydrogenase (decarboxylating) subunit 1</fullName>
        <ecNumber evidence="1">1.4.4.2</ecNumber>
    </recommendedName>
    <alternativeName>
        <fullName evidence="1">Glycine cleavage system P-protein subunit 1</fullName>
    </alternativeName>
    <alternativeName>
        <fullName evidence="1">Glycine decarboxylase subunit 1</fullName>
    </alternativeName>
    <alternativeName>
        <fullName evidence="1">Glycine dehydrogenase (aminomethyl-transferring) subunit 1</fullName>
    </alternativeName>
</protein>
<dbReference type="EC" id="1.4.4.2" evidence="1"/>
<dbReference type="EMBL" id="CP001340">
    <property type="protein sequence ID" value="ACL96928.1"/>
    <property type="molecule type" value="Genomic_DNA"/>
</dbReference>
<dbReference type="RefSeq" id="WP_010921182.1">
    <property type="nucleotide sequence ID" value="NC_011916.1"/>
</dbReference>
<dbReference type="RefSeq" id="YP_002518836.1">
    <property type="nucleotide sequence ID" value="NC_011916.1"/>
</dbReference>
<dbReference type="SMR" id="B8H4V4"/>
<dbReference type="GeneID" id="7332460"/>
<dbReference type="KEGG" id="ccs:CCNA_03463"/>
<dbReference type="PATRIC" id="fig|565050.3.peg.3377"/>
<dbReference type="HOGENOM" id="CLU_004620_0_2_5"/>
<dbReference type="OrthoDB" id="9801272at2"/>
<dbReference type="PhylomeDB" id="B8H4V4"/>
<dbReference type="Proteomes" id="UP000001364">
    <property type="component" value="Chromosome"/>
</dbReference>
<dbReference type="GO" id="GO:0004375">
    <property type="term" value="F:glycine dehydrogenase (decarboxylating) activity"/>
    <property type="evidence" value="ECO:0007669"/>
    <property type="project" value="UniProtKB-EC"/>
</dbReference>
<dbReference type="GO" id="GO:0019464">
    <property type="term" value="P:glycine decarboxylation via glycine cleavage system"/>
    <property type="evidence" value="ECO:0007669"/>
    <property type="project" value="UniProtKB-UniRule"/>
</dbReference>
<dbReference type="GO" id="GO:0009116">
    <property type="term" value="P:nucleoside metabolic process"/>
    <property type="evidence" value="ECO:0007669"/>
    <property type="project" value="InterPro"/>
</dbReference>
<dbReference type="Gene3D" id="3.90.1150.10">
    <property type="entry name" value="Aspartate Aminotransferase, domain 1"/>
    <property type="match status" value="1"/>
</dbReference>
<dbReference type="Gene3D" id="3.40.640.10">
    <property type="entry name" value="Type I PLP-dependent aspartate aminotransferase-like (Major domain)"/>
    <property type="match status" value="1"/>
</dbReference>
<dbReference type="HAMAP" id="MF_00712">
    <property type="entry name" value="GcvPA"/>
    <property type="match status" value="1"/>
</dbReference>
<dbReference type="InterPro" id="IPR023010">
    <property type="entry name" value="GcvPA"/>
</dbReference>
<dbReference type="InterPro" id="IPR049315">
    <property type="entry name" value="GDC-P_N"/>
</dbReference>
<dbReference type="InterPro" id="IPR015424">
    <property type="entry name" value="PyrdxlP-dep_Trfase"/>
</dbReference>
<dbReference type="InterPro" id="IPR015421">
    <property type="entry name" value="PyrdxlP-dep_Trfase_major"/>
</dbReference>
<dbReference type="InterPro" id="IPR015422">
    <property type="entry name" value="PyrdxlP-dep_Trfase_small"/>
</dbReference>
<dbReference type="NCBIfam" id="NF001696">
    <property type="entry name" value="PRK00451.1"/>
    <property type="match status" value="1"/>
</dbReference>
<dbReference type="PANTHER" id="PTHR42806">
    <property type="entry name" value="GLYCINE CLEAVAGE SYSTEM P-PROTEIN"/>
    <property type="match status" value="1"/>
</dbReference>
<dbReference type="PANTHER" id="PTHR42806:SF1">
    <property type="entry name" value="GLYCINE DEHYDROGENASE (DECARBOXYLATING)"/>
    <property type="match status" value="1"/>
</dbReference>
<dbReference type="Pfam" id="PF02347">
    <property type="entry name" value="GDC-P"/>
    <property type="match status" value="1"/>
</dbReference>
<dbReference type="PIRSF" id="PIRSF006815">
    <property type="entry name" value="GcvPA"/>
    <property type="match status" value="1"/>
</dbReference>
<dbReference type="SUPFAM" id="SSF53383">
    <property type="entry name" value="PLP-dependent transferases"/>
    <property type="match status" value="1"/>
</dbReference>